<protein>
    <recommendedName>
        <fullName>Neuropeptide-like protein 1</fullName>
    </recommendedName>
</protein>
<gene>
    <name type="primary">nlp-1</name>
    <name type="ORF">C01C4.1</name>
</gene>
<sequence length="176" mass="20081">MKATFVLACLLVIAAVSHADLLPKRMDANAFRMSFGKRSVSNPAEAKRMDPNAFRMSFGKRSAEQNEQANKEDKATSDKLYDDTKFEEMKRMDANAFRMSFGKRSDAHQAADDQVEYVNDDFSLPEQKRMDANAFRMSFGKRVNLDPNSFRMSFGKRSTVGYNLDARNYFVGLGRR</sequence>
<name>NLP1_CAEEL</name>
<dbReference type="EMBL" id="FO080252">
    <property type="protein sequence ID" value="CCD62363.1"/>
    <property type="molecule type" value="Genomic_DNA"/>
</dbReference>
<dbReference type="PIR" id="T34076">
    <property type="entry name" value="T34076"/>
</dbReference>
<dbReference type="RefSeq" id="NP_508640.1">
    <property type="nucleotide sequence ID" value="NM_076239.6"/>
</dbReference>
<dbReference type="BioGRID" id="45599">
    <property type="interactions" value="1"/>
</dbReference>
<dbReference type="FunCoup" id="Q11088">
    <property type="interactions" value="1521"/>
</dbReference>
<dbReference type="IntAct" id="Q11088">
    <property type="interactions" value="1"/>
</dbReference>
<dbReference type="STRING" id="6239.C01C4.1.1"/>
<dbReference type="PaxDb" id="6239-C01C4.1"/>
<dbReference type="EnsemblMetazoa" id="C01C4.1.1">
    <property type="protein sequence ID" value="C01C4.1.1"/>
    <property type="gene ID" value="WBGene00003739"/>
</dbReference>
<dbReference type="GeneID" id="180661"/>
<dbReference type="KEGG" id="cel:CELE_C01C4.1"/>
<dbReference type="UCSC" id="C01C4.1">
    <property type="organism name" value="c. elegans"/>
</dbReference>
<dbReference type="AGR" id="WB:WBGene00003739"/>
<dbReference type="CTD" id="180661"/>
<dbReference type="WormBase" id="C01C4.1">
    <property type="protein sequence ID" value="CE29554"/>
    <property type="gene ID" value="WBGene00003739"/>
    <property type="gene designation" value="nlp-1"/>
</dbReference>
<dbReference type="eggNOG" id="ENOG502THJB">
    <property type="taxonomic scope" value="Eukaryota"/>
</dbReference>
<dbReference type="HOGENOM" id="CLU_1564300_0_0_1"/>
<dbReference type="InParanoid" id="Q11088"/>
<dbReference type="OMA" id="RMDPNAF"/>
<dbReference type="OrthoDB" id="5789685at2759"/>
<dbReference type="PRO" id="PR:Q11088"/>
<dbReference type="Proteomes" id="UP000001940">
    <property type="component" value="Chromosome X"/>
</dbReference>
<dbReference type="Bgee" id="WBGene00003739">
    <property type="expression patterns" value="Expressed in larva and 3 other cell types or tissues"/>
</dbReference>
<dbReference type="GO" id="GO:0071244">
    <property type="term" value="P:cellular response to carbon dioxide"/>
    <property type="evidence" value="ECO:0000315"/>
    <property type="project" value="UniProtKB"/>
</dbReference>
<dbReference type="GO" id="GO:1903745">
    <property type="term" value="P:negative regulation of nematode pharyngeal pumping"/>
    <property type="evidence" value="ECO:0000315"/>
    <property type="project" value="UniProtKB"/>
</dbReference>
<dbReference type="GO" id="GO:0001966">
    <property type="term" value="P:thigmotaxis"/>
    <property type="evidence" value="ECO:0000315"/>
    <property type="project" value="WormBase"/>
</dbReference>
<evidence type="ECO:0000255" key="1"/>
<evidence type="ECO:0000256" key="2">
    <source>
        <dbReference type="SAM" id="MobiDB-lite"/>
    </source>
</evidence>
<evidence type="ECO:0000269" key="3">
    <source>
    </source>
</evidence>
<comment type="function">
    <text evidence="3">In AWC olfactory sensory neurons, required for the detection of preferred food sources.</text>
</comment>
<comment type="disruption phenotype">
    <text evidence="3">Defective preference between different food odors.</text>
</comment>
<reference key="1">
    <citation type="journal article" date="1998" name="Science">
        <title>Genome sequence of the nematode C. elegans: a platform for investigating biology.</title>
        <authorList>
            <consortium name="The C. elegans sequencing consortium"/>
        </authorList>
    </citation>
    <scope>NUCLEOTIDE SEQUENCE [LARGE SCALE GENOMIC DNA]</scope>
    <source>
        <strain>Bristol N2</strain>
    </source>
</reference>
<reference key="2">
    <citation type="journal article" date="2014" name="J. Neurosci.">
        <title>Dissecting the signaling mechanisms underlying recognition and preference of food odors.</title>
        <authorList>
            <person name="Harris G."/>
            <person name="Shen Y."/>
            <person name="Ha H."/>
            <person name="Donato A."/>
            <person name="Wallis S."/>
            <person name="Zhang X."/>
            <person name="Zhang Y."/>
        </authorList>
    </citation>
    <scope>FUNCTION</scope>
    <scope>DISRUPTION PHENOTYPE</scope>
</reference>
<feature type="signal peptide" evidence="1">
    <location>
        <begin position="1"/>
        <end position="19"/>
    </location>
</feature>
<feature type="chain" id="PRO_0000014274" description="Neuropeptide-like protein 1">
    <location>
        <begin position="20"/>
        <end position="176"/>
    </location>
</feature>
<feature type="region of interest" description="Disordered" evidence="2">
    <location>
        <begin position="59"/>
        <end position="79"/>
    </location>
</feature>
<feature type="compositionally biased region" description="Basic and acidic residues" evidence="2">
    <location>
        <begin position="61"/>
        <end position="79"/>
    </location>
</feature>
<organism>
    <name type="scientific">Caenorhabditis elegans</name>
    <dbReference type="NCBI Taxonomy" id="6239"/>
    <lineage>
        <taxon>Eukaryota</taxon>
        <taxon>Metazoa</taxon>
        <taxon>Ecdysozoa</taxon>
        <taxon>Nematoda</taxon>
        <taxon>Chromadorea</taxon>
        <taxon>Rhabditida</taxon>
        <taxon>Rhabditina</taxon>
        <taxon>Rhabditomorpha</taxon>
        <taxon>Rhabditoidea</taxon>
        <taxon>Rhabditidae</taxon>
        <taxon>Peloderinae</taxon>
        <taxon>Caenorhabditis</taxon>
    </lineage>
</organism>
<keyword id="KW-1185">Reference proteome</keyword>
<keyword id="KW-0732">Signal</keyword>
<accession>Q11088</accession>
<proteinExistence type="inferred from homology"/>